<organism>
    <name type="scientific">Salmonella gallinarum (strain 287/91 / NCTC 13346)</name>
    <dbReference type="NCBI Taxonomy" id="550538"/>
    <lineage>
        <taxon>Bacteria</taxon>
        <taxon>Pseudomonadati</taxon>
        <taxon>Pseudomonadota</taxon>
        <taxon>Gammaproteobacteria</taxon>
        <taxon>Enterobacterales</taxon>
        <taxon>Enterobacteriaceae</taxon>
        <taxon>Salmonella</taxon>
    </lineage>
</organism>
<evidence type="ECO:0000255" key="1">
    <source>
        <dbReference type="HAMAP-Rule" id="MF_01053"/>
    </source>
</evidence>
<sequence length="120" mass="13888">MDYEFLRDVTGGVKVRMSMGHEVVGHWFNEEVKDNLSLLDEVEQAARTVKGSERSWQRAGHEYTIWMDGEEVMIRANQLDFSGDEMEEGMSYYDEESLSLCGMEDFLRVVAAYREFVSKA</sequence>
<name>YACL_SALG2</name>
<comment type="similarity">
    <text evidence="1">Belongs to the UPF0231 family.</text>
</comment>
<accession>B5RH99</accession>
<reference key="1">
    <citation type="journal article" date="2008" name="Genome Res.">
        <title>Comparative genome analysis of Salmonella enteritidis PT4 and Salmonella gallinarum 287/91 provides insights into evolutionary and host adaptation pathways.</title>
        <authorList>
            <person name="Thomson N.R."/>
            <person name="Clayton D.J."/>
            <person name="Windhorst D."/>
            <person name="Vernikos G."/>
            <person name="Davidson S."/>
            <person name="Churcher C."/>
            <person name="Quail M.A."/>
            <person name="Stevens M."/>
            <person name="Jones M.A."/>
            <person name="Watson M."/>
            <person name="Barron A."/>
            <person name="Layton A."/>
            <person name="Pickard D."/>
            <person name="Kingsley R.A."/>
            <person name="Bignell A."/>
            <person name="Clark L."/>
            <person name="Harris B."/>
            <person name="Ormond D."/>
            <person name="Abdellah Z."/>
            <person name="Brooks K."/>
            <person name="Cherevach I."/>
            <person name="Chillingworth T."/>
            <person name="Woodward J."/>
            <person name="Norberczak H."/>
            <person name="Lord A."/>
            <person name="Arrowsmith C."/>
            <person name="Jagels K."/>
            <person name="Moule S."/>
            <person name="Mungall K."/>
            <person name="Saunders M."/>
            <person name="Whitehead S."/>
            <person name="Chabalgoity J.A."/>
            <person name="Maskell D."/>
            <person name="Humphreys T."/>
            <person name="Roberts M."/>
            <person name="Barrow P.A."/>
            <person name="Dougan G."/>
            <person name="Parkhill J."/>
        </authorList>
    </citation>
    <scope>NUCLEOTIDE SEQUENCE [LARGE SCALE GENOMIC DNA]</scope>
    <source>
        <strain>287/91 / NCTC 13346</strain>
    </source>
</reference>
<gene>
    <name evidence="1" type="primary">yacL</name>
    <name type="ordered locus">SG0163</name>
</gene>
<dbReference type="EMBL" id="AM933173">
    <property type="protein sequence ID" value="CAR36071.1"/>
    <property type="molecule type" value="Genomic_DNA"/>
</dbReference>
<dbReference type="RefSeq" id="WP_000384308.1">
    <property type="nucleotide sequence ID" value="NC_011274.1"/>
</dbReference>
<dbReference type="SMR" id="B5RH99"/>
<dbReference type="KEGG" id="seg:SG0163"/>
<dbReference type="HOGENOM" id="CLU_139226_0_0_6"/>
<dbReference type="Proteomes" id="UP000008321">
    <property type="component" value="Chromosome"/>
</dbReference>
<dbReference type="HAMAP" id="MF_01053">
    <property type="entry name" value="UPF0231"/>
    <property type="match status" value="1"/>
</dbReference>
<dbReference type="InterPro" id="IPR008249">
    <property type="entry name" value="UPF0231"/>
</dbReference>
<dbReference type="NCBIfam" id="NF003574">
    <property type="entry name" value="PRK05248.1-1"/>
    <property type="match status" value="1"/>
</dbReference>
<dbReference type="NCBIfam" id="NF003576">
    <property type="entry name" value="PRK05248.1-3"/>
    <property type="match status" value="1"/>
</dbReference>
<dbReference type="Pfam" id="PF06062">
    <property type="entry name" value="UPF0231"/>
    <property type="match status" value="1"/>
</dbReference>
<dbReference type="PIRSF" id="PIRSF006287">
    <property type="entry name" value="UCP006287"/>
    <property type="match status" value="1"/>
</dbReference>
<proteinExistence type="inferred from homology"/>
<protein>
    <recommendedName>
        <fullName evidence="1">UPF0231 protein YacL</fullName>
    </recommendedName>
</protein>
<feature type="chain" id="PRO_1000136304" description="UPF0231 protein YacL">
    <location>
        <begin position="1"/>
        <end position="120"/>
    </location>
</feature>